<proteinExistence type="evidence at protein level"/>
<gene>
    <name type="primary">BUB1B</name>
    <name type="synonym">BUBR1</name>
    <name type="synonym">MAD3L</name>
    <name type="synonym">SSK1</name>
</gene>
<feature type="chain" id="PRO_0000085673" description="Mitotic checkpoint serine/threonine-protein kinase BUB1 beta">
    <location>
        <begin position="1"/>
        <end position="1050"/>
    </location>
</feature>
<feature type="domain" description="BUB1 N-terminal" evidence="3">
    <location>
        <begin position="62"/>
        <end position="226"/>
    </location>
</feature>
<feature type="domain" description="Protein kinase">
    <location>
        <begin position="766"/>
        <end position="1050"/>
    </location>
</feature>
<feature type="region of interest" description="Necessary for interaction with KNL1" evidence="21">
    <location>
        <begin position="152"/>
        <end position="185"/>
    </location>
</feature>
<feature type="region of interest" description="Disordered" evidence="4">
    <location>
        <begin position="368"/>
        <end position="393"/>
    </location>
</feature>
<feature type="region of interest" description="Disordered" evidence="4">
    <location>
        <begin position="456"/>
        <end position="480"/>
    </location>
</feature>
<feature type="short sequence motif" description="Nuclear localization signal" evidence="2">
    <location>
        <begin position="111"/>
        <end position="118"/>
    </location>
</feature>
<feature type="short sequence motif" description="D-box">
    <location>
        <begin position="224"/>
        <end position="232"/>
    </location>
</feature>
<feature type="active site" description="Proton acceptor" evidence="1">
    <location>
        <position position="882"/>
    </location>
</feature>
<feature type="binding site" evidence="1">
    <location>
        <begin position="772"/>
        <end position="780"/>
    </location>
    <ligand>
        <name>ATP</name>
        <dbReference type="ChEBI" id="CHEBI:30616"/>
    </ligand>
</feature>
<feature type="binding site" evidence="1">
    <location>
        <position position="795"/>
    </location>
    <ligand>
        <name>ATP</name>
        <dbReference type="ChEBI" id="CHEBI:30616"/>
    </ligand>
</feature>
<feature type="site" description="Cleavage; by caspase-3" evidence="15">
    <location>
        <begin position="579"/>
        <end position="580"/>
    </location>
</feature>
<feature type="site" description="Cleavage; by caspase-3" evidence="15">
    <location>
        <begin position="610"/>
        <end position="611"/>
    </location>
</feature>
<feature type="modified residue" description="N6-acetyllysine; by PCAF" evidence="24">
    <location>
        <position position="250"/>
    </location>
</feature>
<feature type="modified residue" description="Phosphoserine" evidence="42">
    <location>
        <position position="367"/>
    </location>
</feature>
<feature type="modified residue" description="Phosphoserine" evidence="23 42">
    <location>
        <position position="435"/>
    </location>
</feature>
<feature type="modified residue" description="Phosphoserine" evidence="23 41 42">
    <location>
        <position position="543"/>
    </location>
</feature>
<feature type="modified residue" description="Phosphoserine" evidence="42">
    <location>
        <position position="665"/>
    </location>
</feature>
<feature type="modified residue" description="Phosphoserine" evidence="23 38 39 40 42">
    <location>
        <position position="670"/>
    </location>
</feature>
<feature type="modified residue" description="Phosphoserine; by PLK1" evidence="20">
    <location>
        <position position="676"/>
    </location>
</feature>
<feature type="modified residue" description="Phosphoserine" evidence="42">
    <location>
        <position position="697"/>
    </location>
</feature>
<feature type="modified residue" description="Phosphothreonine; by PLK1" evidence="19">
    <location>
        <position position="792"/>
    </location>
</feature>
<feature type="modified residue" description="Phosphothreonine; by PLK1" evidence="19">
    <location>
        <position position="1008"/>
    </location>
</feature>
<feature type="modified residue" description="Phosphothreonine" evidence="40">
    <location>
        <position position="1042"/>
    </location>
</feature>
<feature type="modified residue" description="Phosphoserine" evidence="23">
    <location>
        <position position="1043"/>
    </location>
</feature>
<feature type="splice variant" id="VSP_036473" description="In isoform 3." evidence="36">
    <original>R</original>
    <variation>RWVFLFHKDNRNINR</variation>
    <location>
        <position position="80"/>
    </location>
</feature>
<feature type="splice variant" id="VSP_036474" description="In isoform 2." evidence="36">
    <location>
        <begin position="113"/>
        <end position="166"/>
    </location>
</feature>
<feature type="splice variant" id="VSP_036475" description="In isoform 2." evidence="36">
    <original>K</original>
    <variation>KVSLSL</variation>
    <location>
        <position position="522"/>
    </location>
</feature>
<feature type="splice variant" id="VSP_036476" description="In isoform 2." evidence="36">
    <location>
        <begin position="608"/>
        <end position="675"/>
    </location>
</feature>
<feature type="sequence variant" id="VAR_008852" description="In a colorectal cancer cell line; dbSNP:rs1392369693." evidence="31">
    <original>M</original>
    <variation>T</variation>
    <location>
        <position position="15"/>
    </location>
</feature>
<feature type="sequence variant" id="VAR_028921" description="In PCS; dbSNP:rs534297115." evidence="16">
    <original>R</original>
    <variation>Q</variation>
    <location>
        <position position="36"/>
    </location>
</feature>
<feature type="sequence variant" id="VAR_040402" description="In dbSNP:rs56079734." evidence="18">
    <original>T</original>
    <variation>M</variation>
    <location>
        <position position="40"/>
    </location>
</feature>
<feature type="sequence variant" id="VAR_008853" description="In dbSNP:rs1801376." evidence="5 10 14 18 31 32 33 34 35">
    <original>R</original>
    <variation>Q</variation>
    <location>
        <position position="349"/>
    </location>
</feature>
<feature type="sequence variant" id="VAR_054549" description="In dbSNP:rs17851677." evidence="14">
    <original>P</original>
    <variation>S</variation>
    <location>
        <position position="378"/>
    </location>
</feature>
<feature type="sequence variant" id="VAR_028922" description="In dbSNP:rs1017842." evidence="18">
    <original>E</original>
    <variation>D</variation>
    <location>
        <position position="390"/>
    </location>
</feature>
<feature type="sequence variant" id="VAR_028923" description="In MVA1; heterozygous compound with nonsense mutation; dbSNP:rs28989187." evidence="13">
    <original>R</original>
    <variation>Q</variation>
    <location>
        <position position="550"/>
    </location>
</feature>
<feature type="sequence variant" id="VAR_008854" description="In dbSNP:rs1801528." evidence="5 18">
    <original>V</original>
    <variation>A</variation>
    <location>
        <position position="618"/>
    </location>
</feature>
<feature type="sequence variant" id="VAR_028924" description="In MVA1; heterozygous compound with nonsense mutation; dbSNP:rs28989182." evidence="13">
    <original>R</original>
    <variation>H</variation>
    <location>
        <position position="814"/>
    </location>
</feature>
<feature type="sequence variant" id="VAR_028925" description="In MVA1; associated with H-921; heterozygous compound with nonsense mutation; dbSNP:rs28989181." evidence="13">
    <original>L</original>
    <variation>F</variation>
    <location>
        <position position="844"/>
    </location>
</feature>
<feature type="sequence variant" id="VAR_028926" description="In MVA1; heterozygous compound with nonsense mutation; dbSNP:rs28989184." evidence="13">
    <original>I</original>
    <variation>T</variation>
    <location>
        <position position="909"/>
    </location>
</feature>
<feature type="sequence variant" id="VAR_028927" description="In MVA1; associated with F-844; heterozygous compound with nonsense mutation; dbSNP:rs28989183." evidence="13">
    <original>Q</original>
    <variation>H</variation>
    <location>
        <position position="921"/>
    </location>
</feature>
<feature type="sequence variant" id="VAR_028928" description="In MVA1; heterozygous compound with nonsense mutation; dbSNP:rs28989185." evidence="13">
    <original>L</original>
    <variation>P</variation>
    <location>
        <position position="1012"/>
    </location>
</feature>
<feature type="mutagenesis site" description="Loss of interaction with KNL1." evidence="21">
    <original>A</original>
    <variation>W</variation>
    <location>
        <position position="159"/>
    </location>
</feature>
<feature type="mutagenesis site" description="Loss of interaction with KNL1." evidence="21">
    <original>F</original>
    <variation>A</variation>
    <location>
        <position position="175"/>
    </location>
</feature>
<feature type="mutagenesis site" description="Abolishes the cleavage by caspase-3." evidence="15">
    <original>D</original>
    <variation>E</variation>
    <location>
        <position position="579"/>
    </location>
</feature>
<feature type="mutagenesis site" description="Abolishes the cleavage by caspase-3." evidence="15">
    <original>D</original>
    <variation>E</variation>
    <location>
        <position position="610"/>
    </location>
</feature>
<feature type="mutagenesis site" description="Induces chromosome congression defects and mitotic delay." evidence="20">
    <original>T</original>
    <variation>A</variation>
    <location>
        <position position="620"/>
    </location>
</feature>
<feature type="mutagenesis site" description="Does not abolish the capacity to inhibit APC/CDC20." evidence="8 9">
    <original>K</original>
    <variation>A</variation>
    <location>
        <position position="795"/>
    </location>
</feature>
<feature type="mutagenesis site" description="Inhibits kinase activity." evidence="8 9">
    <original>K</original>
    <variation>R</variation>
    <location>
        <position position="795"/>
    </location>
</feature>
<feature type="sequence conflict" description="In Ref. 1; AAC23736." evidence="37" ref="1">
    <original>AL</original>
    <variation>VF</variation>
    <location>
        <begin position="248"/>
        <end position="249"/>
    </location>
</feature>
<feature type="sequence conflict" description="In Ref. 8; BAG35587." evidence="37" ref="8">
    <original>S</original>
    <variation>P</variation>
    <location>
        <position position="283"/>
    </location>
</feature>
<feature type="sequence conflict" description="In Ref. 2; AAC06260." evidence="37" ref="2">
    <original>S</original>
    <variation>F</variation>
    <location>
        <position position="788"/>
    </location>
</feature>
<feature type="sequence conflict" description="In Ref. 3; AAC33435." evidence="37" ref="3">
    <original>E</original>
    <variation>K</variation>
    <location>
        <position position="1018"/>
    </location>
</feature>
<feature type="turn" evidence="45">
    <location>
        <begin position="26"/>
        <end position="28"/>
    </location>
</feature>
<feature type="helix" evidence="43">
    <location>
        <begin position="60"/>
        <end position="65"/>
    </location>
</feature>
<feature type="helix" evidence="43">
    <location>
        <begin position="75"/>
        <end position="88"/>
    </location>
</feature>
<feature type="helix" evidence="44">
    <location>
        <begin position="94"/>
        <end position="96"/>
    </location>
</feature>
<feature type="helix" evidence="43">
    <location>
        <begin position="98"/>
        <end position="108"/>
    </location>
</feature>
<feature type="turn" evidence="43">
    <location>
        <begin position="109"/>
        <end position="111"/>
    </location>
</feature>
<feature type="helix" evidence="43">
    <location>
        <begin position="113"/>
        <end position="115"/>
    </location>
</feature>
<feature type="helix" evidence="43">
    <location>
        <begin position="119"/>
        <end position="131"/>
    </location>
</feature>
<feature type="helix" evidence="43">
    <location>
        <begin position="135"/>
        <end position="144"/>
    </location>
</feature>
<feature type="helix" evidence="43">
    <location>
        <begin position="152"/>
        <end position="164"/>
    </location>
</feature>
<feature type="helix" evidence="43">
    <location>
        <begin position="168"/>
        <end position="180"/>
    </location>
</feature>
<feature type="helix" evidence="43">
    <location>
        <begin position="186"/>
        <end position="218"/>
    </location>
</feature>
<sequence>MAAVKKEGGALSEAMSLEGDEWELSKENVQPLRQGRIMSTLQGALAQESACNNTLQQQKRAFEYEIRFYTGNDPLDVWDRYISWTEQNYPQGGKESNMSTLLERAVEALQGEKRYYSDPRFLNLWLKLGRLCNEPLDMYSYLHNQGIGVSLAQFYISWAEEYEARENFRKADAIFQEGIQQKAEPLERLQSQHRQFQARVSRQTLLALEKEEEEEVFESSVPQRSTLAELKSKGKKTARAPIIRVGGALKAPSQNRGLQNPFPQQMQNNSRITVFDENADEASTAELSKPTVQPWIAPPMPRAKENELQAGPWNTGRSLEHRPRGNTASLIAVPAVLPSFTPYVEETARQPVMTPCKIEPSINHILSTRKPGKEEGDPLQRVQSHQQASEEKKEKMMYCKEKIYAGVGEFSFEEIRAEVFRKKLKEQREAELLTSAEKRAEMQKQIEEMEKKLKEIQTTQQERTGDQQEETMPTKETTKLQIASESQKIPGMTLSSSVCQVNCCARETSLAENIWQEQPHSKGPSVPFSIFDEFLLSEKKNKSPPADPPRVLAQRRPLAVLKTSESITSNEDVSPDVCDEFTGIEPLSEDAIITGFRNVTICPNPEDTCDFARAARFVSTPFHEIMSLKDLPSDPERLLPEEDLDVKTSEDQQTACGTIYSQTLSIKKLSPIIEDSREATHSSGFSGSSASVASTSSIKCLQIPEKLELTNETSENPTQSPWCSQYRRQLLKSLPELSASAELCIEDRPMPKLEIEKEIELGNEDYCIKREYLICEDYKLFWVAPRNSAELTVIKVSSQPVPWDFYINLKLKERLNEDFDHFCSCYQYQDGCIVWHQYINCFTLQDLLQHSEYITHEITVLIIYNLLTIVEMLHKAEIVHGDLSPRCLILRNRIHDPYDCNKNNQALKIVDFSYSVDLRVQLDVFTLSGFRTVQILEGQKILANCSSPYQVDLFGIADLAHLLLFKEHLQVFWDGSFWKLSQNISELKDGELWNKFFVRILNANDEATVSVLGELAAEMNGVFDTTFQSHLNKALWKVGKLTSPGALLFQ</sequence>
<keyword id="KW-0002">3D-structure</keyword>
<keyword id="KW-0007">Acetylation</keyword>
<keyword id="KW-0025">Alternative splicing</keyword>
<keyword id="KW-0053">Apoptosis</keyword>
<keyword id="KW-0067">ATP-binding</keyword>
<keyword id="KW-0131">Cell cycle</keyword>
<keyword id="KW-0132">Cell division</keyword>
<keyword id="KW-0137">Centromere</keyword>
<keyword id="KW-0158">Chromosome</keyword>
<keyword id="KW-0963">Cytoplasm</keyword>
<keyword id="KW-0206">Cytoskeleton</keyword>
<keyword id="KW-0225">Disease variant</keyword>
<keyword id="KW-0418">Kinase</keyword>
<keyword id="KW-0995">Kinetochore</keyword>
<keyword id="KW-0498">Mitosis</keyword>
<keyword id="KW-0547">Nucleotide-binding</keyword>
<keyword id="KW-0539">Nucleus</keyword>
<keyword id="KW-0597">Phosphoprotein</keyword>
<keyword id="KW-1267">Proteomics identification</keyword>
<keyword id="KW-1185">Reference proteome</keyword>
<keyword id="KW-0723">Serine/threonine-protein kinase</keyword>
<keyword id="KW-0808">Transferase</keyword>
<keyword id="KW-0043">Tumor suppressor</keyword>
<keyword id="KW-0832">Ubl conjugation</keyword>
<protein>
    <recommendedName>
        <fullName>Mitotic checkpoint serine/threonine-protein kinase BUB1 beta</fullName>
        <ecNumber>2.7.11.1</ecNumber>
    </recommendedName>
    <alternativeName>
        <fullName>MAD3/BUB1-related protein kinase</fullName>
        <shortName>hBUBR1</shortName>
    </alternativeName>
    <alternativeName>
        <fullName>Mitotic checkpoint kinase MAD3L</fullName>
    </alternativeName>
    <alternativeName>
        <fullName>Protein SSK1</fullName>
    </alternativeName>
</protein>
<name>BUB1B_HUMAN</name>
<reference key="1">
    <citation type="journal article" date="1998" name="Biochem. Biophys. Res. Commun.">
        <title>Identification of a novel gene -- SSK1 -- in human endothelial cells exposed to shear stress.</title>
        <authorList>
            <person name="Donadelli R."/>
            <person name="Benatti L."/>
            <person name="Remuzzi A."/>
            <person name="Morigi M."/>
            <person name="Gullans S.R."/>
            <person name="Benigni A."/>
            <person name="Remuzzi G."/>
            <person name="Noris M."/>
        </authorList>
    </citation>
    <scope>NUCLEOTIDE SEQUENCE [MRNA] (ISOFORM 1)</scope>
    <scope>VARIANT GLN-349</scope>
    <source>
        <tissue>Umbilical vein</tissue>
    </source>
</reference>
<reference key="2">
    <citation type="journal article" date="1998" name="J. Cell Biol.">
        <title>The human homologue of Bub3 is required for kinetochore localization of Bub1 and a Mad3/Bub1-related protein kinase.</title>
        <authorList>
            <person name="Taylor S.S."/>
            <person name="Ha E."/>
            <person name="McKeon F."/>
        </authorList>
    </citation>
    <scope>NUCLEOTIDE SEQUENCE [MRNA] (ISOFORM 1)</scope>
    <scope>VARIANT GLN-349</scope>
</reference>
<reference key="3">
    <citation type="journal article" date="1998" name="J. Cell Biol.">
        <title>Characterization of the kinetochore binding domain of CENP-E reveals interactions with the kinetochore proteins CENP-F and hBUBR1.</title>
        <authorList>
            <person name="Chan G.K.T."/>
            <person name="Schaar B.T."/>
            <person name="Yen T.J."/>
        </authorList>
    </citation>
    <scope>NUCLEOTIDE SEQUENCE [MRNA] (ISOFORM 1)</scope>
    <scope>INTERACTION WITH CENPE</scope>
    <scope>SUBCELLULAR LOCATION</scope>
    <scope>VARIANT GLN-349</scope>
</reference>
<reference key="4">
    <citation type="journal article" date="1998" name="Nature">
        <title>Mutations of mitotic checkpoint genes in human cancers.</title>
        <authorList>
            <person name="Cahill D.P."/>
            <person name="Lengauer C."/>
            <person name="Yu J."/>
            <person name="Riggins G.J."/>
            <person name="Willson J.K.V."/>
            <person name="Markowitz S.D."/>
            <person name="Kinzler K.W."/>
            <person name="Vogelstein B."/>
        </authorList>
    </citation>
    <scope>NUCLEOTIDE SEQUENCE [MRNA] (ISOFORM 1)</scope>
    <scope>VARIANTS THR-15 AND GLN-349</scope>
</reference>
<reference key="5">
    <citation type="journal article" date="1999" name="Genomics">
        <title>The mouse mitotic checkpoint gene bub1b, a novel bub1 family member, is expressed in a cell cycle-dependent manner.</title>
        <authorList>
            <person name="Davenport J.W."/>
            <person name="Fernandes E.R."/>
            <person name="Harris L.D."/>
            <person name="Neale G.A.M."/>
            <person name="Goorha R."/>
        </authorList>
    </citation>
    <scope>NUCLEOTIDE SEQUENCE [MRNA] (ISOFORM 1)</scope>
</reference>
<reference key="6">
    <citation type="submission" date="1998-05" db="EMBL/GenBank/DDBJ databases">
        <title>Human MAD3-like protein kinase (hmad3).</title>
        <authorList>
            <person name="Dai W."/>
            <person name="Ouyang B."/>
            <person name="Lan Z."/>
            <person name="Pan H."/>
        </authorList>
    </citation>
    <scope>NUCLEOTIDE SEQUENCE [MRNA] (ISOFORM 1)</scope>
    <scope>VARIANT GLN-349</scope>
</reference>
<reference key="7">
    <citation type="submission" date="2000-10" db="EMBL/GenBank/DDBJ databases">
        <authorList>
            <person name="Seike M."/>
            <person name="Gemma A."/>
            <person name="Hosoya Y."/>
            <person name="Kurimoto F."/>
            <person name="Yoshimura A."/>
            <person name="Kudoh S."/>
        </authorList>
    </citation>
    <scope>NUCLEOTIDE SEQUENCE [GENOMIC DNA]</scope>
</reference>
<reference key="8">
    <citation type="journal article" date="2004" name="Nat. Genet.">
        <title>Complete sequencing and characterization of 21,243 full-length human cDNAs.</title>
        <authorList>
            <person name="Ota T."/>
            <person name="Suzuki Y."/>
            <person name="Nishikawa T."/>
            <person name="Otsuki T."/>
            <person name="Sugiyama T."/>
            <person name="Irie R."/>
            <person name="Wakamatsu A."/>
            <person name="Hayashi K."/>
            <person name="Sato H."/>
            <person name="Nagai K."/>
            <person name="Kimura K."/>
            <person name="Makita H."/>
            <person name="Sekine M."/>
            <person name="Obayashi M."/>
            <person name="Nishi T."/>
            <person name="Shibahara T."/>
            <person name="Tanaka T."/>
            <person name="Ishii S."/>
            <person name="Yamamoto J."/>
            <person name="Saito K."/>
            <person name="Kawai Y."/>
            <person name="Isono Y."/>
            <person name="Nakamura Y."/>
            <person name="Nagahari K."/>
            <person name="Murakami K."/>
            <person name="Yasuda T."/>
            <person name="Iwayanagi T."/>
            <person name="Wagatsuma M."/>
            <person name="Shiratori A."/>
            <person name="Sudo H."/>
            <person name="Hosoiri T."/>
            <person name="Kaku Y."/>
            <person name="Kodaira H."/>
            <person name="Kondo H."/>
            <person name="Sugawara M."/>
            <person name="Takahashi M."/>
            <person name="Kanda K."/>
            <person name="Yokoi T."/>
            <person name="Furuya T."/>
            <person name="Kikkawa E."/>
            <person name="Omura Y."/>
            <person name="Abe K."/>
            <person name="Kamihara K."/>
            <person name="Katsuta N."/>
            <person name="Sato K."/>
            <person name="Tanikawa M."/>
            <person name="Yamazaki M."/>
            <person name="Ninomiya K."/>
            <person name="Ishibashi T."/>
            <person name="Yamashita H."/>
            <person name="Murakawa K."/>
            <person name="Fujimori K."/>
            <person name="Tanai H."/>
            <person name="Kimata M."/>
            <person name="Watanabe M."/>
            <person name="Hiraoka S."/>
            <person name="Chiba Y."/>
            <person name="Ishida S."/>
            <person name="Ono Y."/>
            <person name="Takiguchi S."/>
            <person name="Watanabe S."/>
            <person name="Yosida M."/>
            <person name="Hotuta T."/>
            <person name="Kusano J."/>
            <person name="Kanehori K."/>
            <person name="Takahashi-Fujii A."/>
            <person name="Hara H."/>
            <person name="Tanase T.-O."/>
            <person name="Nomura Y."/>
            <person name="Togiya S."/>
            <person name="Komai F."/>
            <person name="Hara R."/>
            <person name="Takeuchi K."/>
            <person name="Arita M."/>
            <person name="Imose N."/>
            <person name="Musashino K."/>
            <person name="Yuuki H."/>
            <person name="Oshima A."/>
            <person name="Sasaki N."/>
            <person name="Aotsuka S."/>
            <person name="Yoshikawa Y."/>
            <person name="Matsunawa H."/>
            <person name="Ichihara T."/>
            <person name="Shiohata N."/>
            <person name="Sano S."/>
            <person name="Moriya S."/>
            <person name="Momiyama H."/>
            <person name="Satoh N."/>
            <person name="Takami S."/>
            <person name="Terashima Y."/>
            <person name="Suzuki O."/>
            <person name="Nakagawa S."/>
            <person name="Senoh A."/>
            <person name="Mizoguchi H."/>
            <person name="Goto Y."/>
            <person name="Shimizu F."/>
            <person name="Wakebe H."/>
            <person name="Hishigaki H."/>
            <person name="Watanabe T."/>
            <person name="Sugiyama A."/>
            <person name="Takemoto M."/>
            <person name="Kawakami B."/>
            <person name="Yamazaki M."/>
            <person name="Watanabe K."/>
            <person name="Kumagai A."/>
            <person name="Itakura S."/>
            <person name="Fukuzumi Y."/>
            <person name="Fujimori Y."/>
            <person name="Komiyama M."/>
            <person name="Tashiro H."/>
            <person name="Tanigami A."/>
            <person name="Fujiwara T."/>
            <person name="Ono T."/>
            <person name="Yamada K."/>
            <person name="Fujii Y."/>
            <person name="Ozaki K."/>
            <person name="Hirao M."/>
            <person name="Ohmori Y."/>
            <person name="Kawabata A."/>
            <person name="Hikiji T."/>
            <person name="Kobatake N."/>
            <person name="Inagaki H."/>
            <person name="Ikema Y."/>
            <person name="Okamoto S."/>
            <person name="Okitani R."/>
            <person name="Kawakami T."/>
            <person name="Noguchi S."/>
            <person name="Itoh T."/>
            <person name="Shigeta K."/>
            <person name="Senba T."/>
            <person name="Matsumura K."/>
            <person name="Nakajima Y."/>
            <person name="Mizuno T."/>
            <person name="Morinaga M."/>
            <person name="Sasaki M."/>
            <person name="Togashi T."/>
            <person name="Oyama M."/>
            <person name="Hata H."/>
            <person name="Watanabe M."/>
            <person name="Komatsu T."/>
            <person name="Mizushima-Sugano J."/>
            <person name="Satoh T."/>
            <person name="Shirai Y."/>
            <person name="Takahashi Y."/>
            <person name="Nakagawa K."/>
            <person name="Okumura K."/>
            <person name="Nagase T."/>
            <person name="Nomura N."/>
            <person name="Kikuchi H."/>
            <person name="Masuho Y."/>
            <person name="Yamashita R."/>
            <person name="Nakai K."/>
            <person name="Yada T."/>
            <person name="Nakamura Y."/>
            <person name="Ohara O."/>
            <person name="Isogai T."/>
            <person name="Sugano S."/>
        </authorList>
    </citation>
    <scope>NUCLEOTIDE SEQUENCE [LARGE SCALE MRNA] (ISOFORMS 1; 2 AND 3)</scope>
    <scope>VARIANT GLN-349</scope>
    <source>
        <tissue>Tongue</tissue>
    </source>
</reference>
<reference key="9">
    <citation type="submission" date="2005-03" db="EMBL/GenBank/DDBJ databases">
        <authorList>
            <person name="Totoki Y."/>
            <person name="Toyoda A."/>
            <person name="Takeda T."/>
            <person name="Sakaki Y."/>
            <person name="Tanaka A."/>
            <person name="Yokoyama S."/>
            <person name="Ohara O."/>
            <person name="Nagase T."/>
            <person name="Kikuno R.F."/>
        </authorList>
    </citation>
    <scope>NUCLEOTIDE SEQUENCE [LARGE SCALE MRNA] (ISOFORM 1)</scope>
    <source>
        <tissue>Brain</tissue>
    </source>
</reference>
<reference key="10">
    <citation type="journal article" date="2004" name="Genome Res.">
        <title>The status, quality, and expansion of the NIH full-length cDNA project: the Mammalian Gene Collection (MGC).</title>
        <authorList>
            <consortium name="The MGC Project Team"/>
        </authorList>
    </citation>
    <scope>NUCLEOTIDE SEQUENCE [LARGE SCALE MRNA] (ISOFORM 1)</scope>
    <scope>VARIANTS GLN-349 AND SER-378</scope>
    <source>
        <tissue>Placenta</tissue>
    </source>
</reference>
<reference key="11">
    <citation type="journal article" date="1999" name="Cell Growth Differ.">
        <title>BUBR1 phosphorylation is regulated during mitotic checkpoint activation.</title>
        <authorList>
            <person name="Li W."/>
            <person name="Lan Z."/>
            <person name="Wu H."/>
            <person name="Wu S."/>
            <person name="Meadows J."/>
            <person name="Chen J."/>
            <person name="Zhu V."/>
            <person name="Dai W."/>
        </authorList>
    </citation>
    <scope>PHOSPHORYLATION</scope>
    <scope>TISSUE SPECIFICITY</scope>
    <scope>INDUCTION</scope>
</reference>
<reference key="12">
    <citation type="journal article" date="1999" name="J. Cell Biol.">
        <title>Human BUBR1 is a mitotic checkpoint kinase that monitors CENP-E functions at kinetochores and binds the cyclosome/APC.</title>
        <authorList>
            <person name="Chan G.K."/>
            <person name="Jablonski S.A."/>
            <person name="Sudakin V."/>
            <person name="Hittle J.C."/>
            <person name="Yen T.J."/>
        </authorList>
    </citation>
    <scope>FUNCTION</scope>
    <scope>SUBCELLULAR LOCATION</scope>
    <scope>INDUCTION</scope>
    <scope>PHOSPHORYLATION</scope>
    <scope>INTERACTION WITH APC/C</scope>
</reference>
<reference key="13">
    <citation type="journal article" date="2001" name="Dev. Cell">
        <title>Mad2-independent inhibition of APC/Cdc20 by the mitotic checkpoint protein BubR1.</title>
        <authorList>
            <person name="Tang Z."/>
            <person name="Bharadwaj R."/>
            <person name="Li B."/>
            <person name="Yu H."/>
        </authorList>
    </citation>
    <scope>FUNCTION</scope>
    <scope>IDENTIFICATION IN A COMPLEX WITH CDC20 AND BUB3</scope>
    <scope>MUTAGENESIS OF LYS-795</scope>
</reference>
<reference key="14">
    <citation type="journal article" date="2003" name="Cancer Cell">
        <title>Dual roles of human BubR1, a mitotic checkpoint kinase, in the monitoring of chromosomal instability.</title>
        <authorList>
            <person name="Shin H.J."/>
            <person name="Baek K.H."/>
            <person name="Jeon A.H."/>
            <person name="Park M.T."/>
            <person name="Lee S.J."/>
            <person name="Kang C.M."/>
            <person name="Lee H.S."/>
            <person name="Yoo S.H."/>
            <person name="Chung D.H."/>
            <person name="Sung Y.C."/>
            <person name="McKeon F."/>
            <person name="Lee C.W."/>
        </authorList>
    </citation>
    <scope>FUNCTION</scope>
    <scope>SUBCELLULAR LOCATION</scope>
    <scope>DEGRADATION BY THE PROTEASOME</scope>
</reference>
<reference key="15">
    <citation type="journal article" date="2003" name="J. Cell Biol.">
        <title>Centromere-associated protein-E is essential for the mammalian mitotic checkpoint to prevent aneuploidy due to single chromosome loss.</title>
        <authorList>
            <person name="Weaver B.A."/>
            <person name="Bonday Z.Q."/>
            <person name="Putkey F.R."/>
            <person name="Kops G.J."/>
            <person name="Silk A.D."/>
            <person name="Cleveland D.W."/>
        </authorList>
    </citation>
    <scope>ACTIVITY REGULATION</scope>
    <scope>INTERACTION WITH CENPE</scope>
    <scope>AUTOPHOSPHORYLATION</scope>
    <scope>MUTAGENESIS OF LYS-795</scope>
</reference>
<reference key="16">
    <citation type="journal article" date="2004" name="J. Cell Sci.">
        <title>Bub1 is required for kinetochore localization of BubR1, Cenp-E, Cenp-F and Mad2, and chromosome congression.</title>
        <authorList>
            <person name="Johnson V.L."/>
            <person name="Scott M.I."/>
            <person name="Holt S.V."/>
            <person name="Hussein D."/>
            <person name="Taylor S.S."/>
        </authorList>
    </citation>
    <scope>FUNCTION</scope>
</reference>
<reference key="17">
    <citation type="journal article" date="2005" name="Mol. Cell. Biol.">
        <title>Caspase-mediated specific cleavage of BubR1 is a determinant of mitotic progression.</title>
        <authorList>
            <person name="Kim M."/>
            <person name="Murphy K."/>
            <person name="Liu F."/>
            <person name="Parker S.E."/>
            <person name="Dowling M.L."/>
            <person name="Baff W."/>
            <person name="Kao G.D."/>
        </authorList>
    </citation>
    <scope>PROTEOLYTIC CLEAVAGE AT ASP-579 AND ASP-610 BY CASPASE-3</scope>
    <scope>INDUCTION</scope>
    <scope>MUTAGENESIS OF ASP-579 AND ASP-610</scope>
</reference>
<reference key="18">
    <citation type="journal article" date="2006" name="Mol. Biol. Cell">
        <title>Phosphorylation- and polo-box-dependent binding of Plk1 to Bub1 is required for the kinetochore localization of Plk1.</title>
        <authorList>
            <person name="Qi W."/>
            <person name="Tang Z."/>
            <person name="Yu H."/>
        </authorList>
    </citation>
    <scope>SUBCELLULAR LOCATION</scope>
    <scope>INTERACTION WITH PLK1</scope>
</reference>
<reference key="19">
    <citation type="journal article" date="2006" name="Nat. Biotechnol.">
        <title>A probability-based approach for high-throughput protein phosphorylation analysis and site localization.</title>
        <authorList>
            <person name="Beausoleil S.A."/>
            <person name="Villen J."/>
            <person name="Gerber S.A."/>
            <person name="Rush J."/>
            <person name="Gygi S.P."/>
        </authorList>
    </citation>
    <scope>IDENTIFICATION BY MASS SPECTROMETRY [LARGE SCALE ANALYSIS]</scope>
    <source>
        <tissue>Cervix carcinoma</tissue>
    </source>
</reference>
<reference key="20">
    <citation type="journal article" date="2007" name="Dev. Cell">
        <title>Human Blinkin/AF15q14 is required for chromosome alignment and the mitotic checkpoint through direct interaction with Bub1 and BubR1.</title>
        <authorList>
            <person name="Kiyomitsu T."/>
            <person name="Obuse C."/>
            <person name="Yanagida M."/>
        </authorList>
    </citation>
    <scope>INTERACTION WITH KNL1</scope>
    <scope>MUTAGENESIS OF ALA-159 AND PHE-175</scope>
</reference>
<reference key="21">
    <citation type="journal article" date="2007" name="Genes Dev.">
        <title>Tension-sensitive Plk1 phosphorylation on BubR1 regulates the stability of kinetochore microtubule interactions.</title>
        <authorList>
            <person name="Elowe S."/>
            <person name="Huemmer S."/>
            <person name="Uldschmid A."/>
            <person name="Li X."/>
            <person name="Nigg E.A."/>
        </authorList>
    </citation>
    <scope>INTERACTION WITH PLK1</scope>
    <scope>SUBCELLULAR LOCATION</scope>
    <scope>PHOSPHORYLATION AT SER-676</scope>
    <scope>MUTAGENESIS OF THR-620</scope>
</reference>
<reference key="22">
    <citation type="journal article" date="2007" name="J. Biol. Chem.">
        <title>Polo-like kinase 1 facilitates chromosome alignment during prometaphase through BubR1.</title>
        <authorList>
            <person name="Matsumura S."/>
            <person name="Toyoshima F."/>
            <person name="Nishida E."/>
        </authorList>
    </citation>
    <scope>INTERACTION WITH PLK1</scope>
    <scope>SUBCELLULAR LOCATION</scope>
    <scope>PHOSPHORYLATION AT THR-792 AND THR-1008</scope>
</reference>
<reference key="23">
    <citation type="journal article" date="2008" name="J. Cell Biol.">
        <title>Phosphorylation sites in BubR1 that regulate kinetochore attachment, tension, and mitotic exit.</title>
        <authorList>
            <person name="Huang H."/>
            <person name="Hittle J."/>
            <person name="Zappacosta F."/>
            <person name="Annan R.S."/>
            <person name="Hershko A."/>
            <person name="Yen T.J."/>
        </authorList>
    </citation>
    <scope>PHOSPHORYLATION AT SER-435; SER-543; SER-670 AND SER-1043</scope>
</reference>
<reference key="24">
    <citation type="journal article" date="2008" name="Mol. Cell">
        <title>SUMO-2/3 modification and binding regulate the association of CENP-E with kinetochores and progression through mitosis.</title>
        <authorList>
            <person name="Zhang X.-D."/>
            <person name="Goeres J."/>
            <person name="Zhang H."/>
            <person name="Yen T.J."/>
            <person name="Porter A.C.G."/>
            <person name="Matunis M.J."/>
        </authorList>
    </citation>
    <scope>SUMOYLATION</scope>
</reference>
<reference key="25">
    <citation type="journal article" date="2008" name="Mol. Cell">
        <title>Kinase-selective enrichment enables quantitative phosphoproteomics of the kinome across the cell cycle.</title>
        <authorList>
            <person name="Daub H."/>
            <person name="Olsen J.V."/>
            <person name="Bairlein M."/>
            <person name="Gnad F."/>
            <person name="Oppermann F.S."/>
            <person name="Korner R."/>
            <person name="Greff Z."/>
            <person name="Keri G."/>
            <person name="Stemmann O."/>
            <person name="Mann M."/>
        </authorList>
    </citation>
    <scope>PHOSPHORYLATION [LARGE SCALE ANALYSIS] AT SER-670</scope>
    <scope>IDENTIFICATION BY MASS SPECTROMETRY [LARGE SCALE ANALYSIS]</scope>
    <source>
        <tissue>Cervix carcinoma</tissue>
    </source>
</reference>
<reference key="26">
    <citation type="journal article" date="2008" name="Proc. Natl. Acad. Sci. U.S.A.">
        <title>A quantitative atlas of mitotic phosphorylation.</title>
        <authorList>
            <person name="Dephoure N."/>
            <person name="Zhou C."/>
            <person name="Villen J."/>
            <person name="Beausoleil S.A."/>
            <person name="Bakalarski C.E."/>
            <person name="Elledge S.J."/>
            <person name="Gygi S.P."/>
        </authorList>
    </citation>
    <scope>PHOSPHORYLATION [LARGE SCALE ANALYSIS] AT SER-670</scope>
    <scope>IDENTIFICATION BY MASS SPECTROMETRY [LARGE SCALE ANALYSIS]</scope>
    <source>
        <tissue>Cervix carcinoma</tissue>
    </source>
</reference>
<reference key="27">
    <citation type="journal article" date="2009" name="Anal. Chem.">
        <title>Lys-N and trypsin cover complementary parts of the phosphoproteome in a refined SCX-based approach.</title>
        <authorList>
            <person name="Gauci S."/>
            <person name="Helbig A.O."/>
            <person name="Slijper M."/>
            <person name="Krijgsveld J."/>
            <person name="Heck A.J."/>
            <person name="Mohammed S."/>
        </authorList>
    </citation>
    <scope>IDENTIFICATION BY MASS SPECTROMETRY [LARGE SCALE ANALYSIS]</scope>
</reference>
<reference key="28">
    <citation type="journal article" date="2009" name="Cell Cycle">
        <title>Depletion of BubR1 promotes premature centrosomal localization of cyclin B1 and accelerates mitotic entry.</title>
        <authorList>
            <person name="Park S.-Y."/>
            <person name="Kim S."/>
            <person name="Cho H."/>
            <person name="Kwon S.-H."/>
            <person name="Chae S."/>
            <person name="Kang D."/>
            <person name="Seong Y.-S."/>
            <person name="Cho H."/>
        </authorList>
    </citation>
    <scope>FUNCTION</scope>
</reference>
<reference key="29">
    <citation type="journal article" date="2009" name="Cell Cycle">
        <title>Defects in chromosome congression and mitotic progression in KIF18A-deficient cells are partly mediated through impaired functions of CENP-E.</title>
        <authorList>
            <person name="Huang Y."/>
            <person name="Yao Y."/>
            <person name="Xu H.-Z."/>
            <person name="Wang Z.-G."/>
            <person name="Lu L."/>
            <person name="Dai W."/>
        </authorList>
    </citation>
    <scope>INTERACTION WITH CENPE</scope>
    <scope>SUBCELLULAR LOCATION</scope>
</reference>
<reference key="30">
    <citation type="journal article" date="2009" name="EMBO J.">
        <title>BubR1 acetylation at prometaphase is required for modulating APC/C activity and timing of mitosis.</title>
        <authorList>
            <person name="Choi E."/>
            <person name="Choe H."/>
            <person name="Min J."/>
            <person name="Choi J.Y."/>
            <person name="Kim J."/>
            <person name="Lee H."/>
        </authorList>
    </citation>
    <scope>INTERACTION WITH KAT2B</scope>
    <scope>ACETYLATION AT LYS-250</scope>
    <scope>UBIQUITINATION</scope>
</reference>
<reference key="31">
    <citation type="journal article" date="2009" name="Oncogene">
        <title>BubR1 localizes to centrosomes and suppresses centrosome amplification via regulating Plk1 activity in interphase cells.</title>
        <authorList>
            <person name="Izumi H."/>
            <person name="Matsumoto Y."/>
            <person name="Ikeuchi T."/>
            <person name="Saya H."/>
            <person name="Kajii T."/>
            <person name="Matsuura S."/>
        </authorList>
    </citation>
    <scope>FUNCTION</scope>
    <scope>SUBCELLULAR LOCATION</scope>
    <scope>INTERACTION WITH PLK1</scope>
</reference>
<reference key="32">
    <citation type="journal article" date="2010" name="Sci. Signal.">
        <title>Quantitative phosphoproteomics reveals widespread full phosphorylation site occupancy during mitosis.</title>
        <authorList>
            <person name="Olsen J.V."/>
            <person name="Vermeulen M."/>
            <person name="Santamaria A."/>
            <person name="Kumar C."/>
            <person name="Miller M.L."/>
            <person name="Jensen L.J."/>
            <person name="Gnad F."/>
            <person name="Cox J."/>
            <person name="Jensen T.S."/>
            <person name="Nigg E.A."/>
            <person name="Brunak S."/>
            <person name="Mann M."/>
        </authorList>
    </citation>
    <scope>PHOSPHORYLATION [LARGE SCALE ANALYSIS] AT SER-670 AND THR-1042</scope>
    <scope>IDENTIFICATION BY MASS SPECTROMETRY [LARGE SCALE ANALYSIS]</scope>
    <source>
        <tissue>Cervix carcinoma</tissue>
    </source>
</reference>
<reference key="33">
    <citation type="journal article" date="2011" name="BMC Syst. Biol.">
        <title>Initial characterization of the human central proteome.</title>
        <authorList>
            <person name="Burkard T.R."/>
            <person name="Planyavsky M."/>
            <person name="Kaupe I."/>
            <person name="Breitwieser F.P."/>
            <person name="Buerckstuemmer T."/>
            <person name="Bennett K.L."/>
            <person name="Superti-Furga G."/>
            <person name="Colinge J."/>
        </authorList>
    </citation>
    <scope>IDENTIFICATION BY MASS SPECTROMETRY [LARGE SCALE ANALYSIS]</scope>
</reference>
<reference key="34">
    <citation type="journal article" date="2011" name="Sci. Signal.">
        <title>System-wide temporal characterization of the proteome and phosphoproteome of human embryonic stem cell differentiation.</title>
        <authorList>
            <person name="Rigbolt K.T."/>
            <person name="Prokhorova T.A."/>
            <person name="Akimov V."/>
            <person name="Henningsen J."/>
            <person name="Johansen P.T."/>
            <person name="Kratchmarova I."/>
            <person name="Kassem M."/>
            <person name="Mann M."/>
            <person name="Olsen J.V."/>
            <person name="Blagoev B."/>
        </authorList>
    </citation>
    <scope>PHOSPHORYLATION [LARGE SCALE ANALYSIS] AT SER-543</scope>
    <scope>IDENTIFICATION BY MASS SPECTROMETRY [LARGE SCALE ANALYSIS]</scope>
</reference>
<reference key="35">
    <citation type="journal article" date="2013" name="J. Proteome Res.">
        <title>Toward a comprehensive characterization of a human cancer cell phosphoproteome.</title>
        <authorList>
            <person name="Zhou H."/>
            <person name="Di Palma S."/>
            <person name="Preisinger C."/>
            <person name="Peng M."/>
            <person name="Polat A.N."/>
            <person name="Heck A.J."/>
            <person name="Mohammed S."/>
        </authorList>
    </citation>
    <scope>PHOSPHORYLATION [LARGE SCALE ANALYSIS] AT SER-367; SER-435; SER-543; SER-665; SER-670 AND SER-697</scope>
    <scope>IDENTIFICATION BY MASS SPECTROMETRY [LARGE SCALE ANALYSIS]</scope>
    <source>
        <tissue>Cervix carcinoma</tissue>
        <tissue>Erythroleukemia</tissue>
    </source>
</reference>
<reference key="36">
    <citation type="journal article" date="2018" name="J. Biol. Chem.">
        <title>Direct interactions of mitotic arrest deficient 1 (MAD1) domains with each other and MAD2 conformers are required for mitotic checkpoint signaling.</title>
        <authorList>
            <person name="Ji W."/>
            <person name="Luo Y."/>
            <person name="Ahmad E."/>
            <person name="Liu S.T."/>
        </authorList>
    </citation>
    <scope>INTERACTION WITH MAD2L1</scope>
</reference>
<reference key="37">
    <citation type="journal article" date="2018" name="Mol. Cell">
        <title>PELI1 selectively targets kinase-active RIP3 for ubiquitylation-dependent proteasomal degradation.</title>
        <authorList>
            <person name="Choi S.W."/>
            <person name="Park H.H."/>
            <person name="Kim S."/>
            <person name="Chung J.M."/>
            <person name="Noh H.J."/>
            <person name="Kim S.K."/>
            <person name="Song H.K."/>
            <person name="Lee C.W."/>
            <person name="Morgan M.J."/>
            <person name="Kang H.C."/>
            <person name="Kim Y.S."/>
        </authorList>
    </citation>
    <scope>INTERACTION WITH RIPK3</scope>
</reference>
<reference key="38">
    <citation type="journal article" date="2020" name="Aging Cell">
        <title>Premature aging syndrome showing random chromosome number instabilities with CDC20 mutation.</title>
        <authorList>
            <person name="Fujita H."/>
            <person name="Sasaki T."/>
            <person name="Miyamoto T."/>
            <person name="Akutsu S.N."/>
            <person name="Sato S."/>
            <person name="Mori T."/>
            <person name="Nakabayashi K."/>
            <person name="Hata K."/>
            <person name="Suzuki H."/>
            <person name="Kosaki K."/>
            <person name="Matsuura S."/>
            <person name="Matsubara Y."/>
            <person name="Amagai M."/>
            <person name="Kubo A."/>
        </authorList>
    </citation>
    <scope>INTERACTION WITH CDC20</scope>
</reference>
<reference key="39">
    <citation type="journal article" date="2022" name="Proc. Natl. Acad. Sci. U.S.A.">
        <title>Role of ubiquitin-protein ligase UBR5 in the disassembly of mitotic checkpoint complexes.</title>
        <authorList>
            <person name="Kaisari S."/>
            <person name="Miniowitz-Shemtov S."/>
            <person name="Sitry-Shevah D."/>
            <person name="Shomer P."/>
            <person name="Kozlov G."/>
            <person name="Gehring K."/>
            <person name="Hershko A."/>
        </authorList>
    </citation>
    <scope>UBIQUITINATION</scope>
</reference>
<reference key="40">
    <citation type="journal article" date="1999" name="Genomics">
        <title>Characterization of MAD2B and other mitotic spindle checkpoint genes.</title>
        <authorList>
            <person name="Cahill D.P."/>
            <person name="da Costa L.T."/>
            <person name="Carson-Walter E.B."/>
            <person name="Kinzler K.W."/>
            <person name="Vogelstein B."/>
            <person name="Lengauer C."/>
        </authorList>
    </citation>
    <scope>VARIANTS GLN-349 AND ALA-618</scope>
</reference>
<reference key="41">
    <citation type="journal article" date="2004" name="Nat. Genet.">
        <title>Constitutional aneuploidy and cancer predisposition caused by biallelic mutations in BUB1B.</title>
        <authorList>
            <person name="Hanks S."/>
            <person name="Coleman K."/>
            <person name="Reid S."/>
            <person name="Plaja A."/>
            <person name="Firth H."/>
            <person name="Fitzpatrick D."/>
            <person name="Kidd A."/>
            <person name="Mehes K."/>
            <person name="Nash R."/>
            <person name="Robin N."/>
            <person name="Shannon N."/>
            <person name="Tolmie J."/>
            <person name="Swansbury J."/>
            <person name="Irrthum A."/>
            <person name="Douglas J."/>
            <person name="Rahman N."/>
        </authorList>
    </citation>
    <scope>VARIANTS MVA1 GLN-550; HIS-814; PHE-844; THR-909; HIS-921 AND PRO-1012</scope>
</reference>
<reference key="42">
    <citation type="journal article" date="2006" name="Am. J. Med. Genet. A">
        <title>Monoallelic BUB1B mutations and defective mitotic-spindle checkpoint in seven families with premature chromatid separation (PCS) syndrome.</title>
        <authorList>
            <person name="Matsuura S."/>
            <person name="Matsumoto Y."/>
            <person name="Morishima K."/>
            <person name="Izumi H."/>
            <person name="Matsumoto H."/>
            <person name="Ito E."/>
            <person name="Tsutsui K."/>
            <person name="Kobayashi J."/>
            <person name="Tauchi H."/>
            <person name="Kajiwara Y."/>
            <person name="Hama S."/>
            <person name="Kurisu K."/>
            <person name="Tahara H."/>
            <person name="Oshimura M."/>
            <person name="Komatsu K."/>
            <person name="Ikeuchi T."/>
            <person name="Kajii T."/>
        </authorList>
    </citation>
    <scope>VARIANT PCS GLN-36</scope>
</reference>
<reference key="43">
    <citation type="journal article" date="2007" name="Nature">
        <title>Patterns of somatic mutation in human cancer genomes.</title>
        <authorList>
            <person name="Greenman C."/>
            <person name="Stephens P."/>
            <person name="Smith R."/>
            <person name="Dalgliesh G.L."/>
            <person name="Hunter C."/>
            <person name="Bignell G."/>
            <person name="Davies H."/>
            <person name="Teague J."/>
            <person name="Butler A."/>
            <person name="Stevens C."/>
            <person name="Edkins S."/>
            <person name="O'Meara S."/>
            <person name="Vastrik I."/>
            <person name="Schmidt E.E."/>
            <person name="Avis T."/>
            <person name="Barthorpe S."/>
            <person name="Bhamra G."/>
            <person name="Buck G."/>
            <person name="Choudhury B."/>
            <person name="Clements J."/>
            <person name="Cole J."/>
            <person name="Dicks E."/>
            <person name="Forbes S."/>
            <person name="Gray K."/>
            <person name="Halliday K."/>
            <person name="Harrison R."/>
            <person name="Hills K."/>
            <person name="Hinton J."/>
            <person name="Jenkinson A."/>
            <person name="Jones D."/>
            <person name="Menzies A."/>
            <person name="Mironenko T."/>
            <person name="Perry J."/>
            <person name="Raine K."/>
            <person name="Richardson D."/>
            <person name="Shepherd R."/>
            <person name="Small A."/>
            <person name="Tofts C."/>
            <person name="Varian J."/>
            <person name="Webb T."/>
            <person name="West S."/>
            <person name="Widaa S."/>
            <person name="Yates A."/>
            <person name="Cahill D.P."/>
            <person name="Louis D.N."/>
            <person name="Goldstraw P."/>
            <person name="Nicholson A.G."/>
            <person name="Brasseur F."/>
            <person name="Looijenga L."/>
            <person name="Weber B.L."/>
            <person name="Chiew Y.-E."/>
            <person name="DeFazio A."/>
            <person name="Greaves M.F."/>
            <person name="Green A.R."/>
            <person name="Campbell P."/>
            <person name="Birney E."/>
            <person name="Easton D.F."/>
            <person name="Chenevix-Trench G."/>
            <person name="Tan M.-H."/>
            <person name="Khoo S.K."/>
            <person name="Teh B.T."/>
            <person name="Yuen S.T."/>
            <person name="Leung S.Y."/>
            <person name="Wooster R."/>
            <person name="Futreal P.A."/>
            <person name="Stratton M.R."/>
        </authorList>
    </citation>
    <scope>VARIANTS [LARGE SCALE ANALYSIS] MET-40; GLN-349; ASP-390 AND ALA-618</scope>
</reference>
<organism>
    <name type="scientific">Homo sapiens</name>
    <name type="common">Human</name>
    <dbReference type="NCBI Taxonomy" id="9606"/>
    <lineage>
        <taxon>Eukaryota</taxon>
        <taxon>Metazoa</taxon>
        <taxon>Chordata</taxon>
        <taxon>Craniata</taxon>
        <taxon>Vertebrata</taxon>
        <taxon>Euteleostomi</taxon>
        <taxon>Mammalia</taxon>
        <taxon>Eutheria</taxon>
        <taxon>Euarchontoglires</taxon>
        <taxon>Primates</taxon>
        <taxon>Haplorrhini</taxon>
        <taxon>Catarrhini</taxon>
        <taxon>Hominidae</taxon>
        <taxon>Homo</taxon>
    </lineage>
</organism>
<evidence type="ECO:0000250" key="1"/>
<evidence type="ECO:0000255" key="2"/>
<evidence type="ECO:0000255" key="3">
    <source>
        <dbReference type="PROSITE-ProRule" id="PRU00822"/>
    </source>
</evidence>
<evidence type="ECO:0000256" key="4">
    <source>
        <dbReference type="SAM" id="MobiDB-lite"/>
    </source>
</evidence>
<evidence type="ECO:0000269" key="5">
    <source>
    </source>
</evidence>
<evidence type="ECO:0000269" key="6">
    <source>
    </source>
</evidence>
<evidence type="ECO:0000269" key="7">
    <source>
    </source>
</evidence>
<evidence type="ECO:0000269" key="8">
    <source>
    </source>
</evidence>
<evidence type="ECO:0000269" key="9">
    <source>
    </source>
</evidence>
<evidence type="ECO:0000269" key="10">
    <source>
    </source>
</evidence>
<evidence type="ECO:0000269" key="11">
    <source>
    </source>
</evidence>
<evidence type="ECO:0000269" key="12">
    <source>
    </source>
</evidence>
<evidence type="ECO:0000269" key="13">
    <source>
    </source>
</evidence>
<evidence type="ECO:0000269" key="14">
    <source>
    </source>
</evidence>
<evidence type="ECO:0000269" key="15">
    <source>
    </source>
</evidence>
<evidence type="ECO:0000269" key="16">
    <source>
    </source>
</evidence>
<evidence type="ECO:0000269" key="17">
    <source>
    </source>
</evidence>
<evidence type="ECO:0000269" key="18">
    <source>
    </source>
</evidence>
<evidence type="ECO:0000269" key="19">
    <source>
    </source>
</evidence>
<evidence type="ECO:0000269" key="20">
    <source>
    </source>
</evidence>
<evidence type="ECO:0000269" key="21">
    <source>
    </source>
</evidence>
<evidence type="ECO:0000269" key="22">
    <source>
    </source>
</evidence>
<evidence type="ECO:0000269" key="23">
    <source>
    </source>
</evidence>
<evidence type="ECO:0000269" key="24">
    <source>
    </source>
</evidence>
<evidence type="ECO:0000269" key="25">
    <source>
    </source>
</evidence>
<evidence type="ECO:0000269" key="26">
    <source>
    </source>
</evidence>
<evidence type="ECO:0000269" key="27">
    <source>
    </source>
</evidence>
<evidence type="ECO:0000269" key="28">
    <source>
    </source>
</evidence>
<evidence type="ECO:0000269" key="29">
    <source>
    </source>
</evidence>
<evidence type="ECO:0000269" key="30">
    <source>
    </source>
</evidence>
<evidence type="ECO:0000269" key="31">
    <source>
    </source>
</evidence>
<evidence type="ECO:0000269" key="32">
    <source>
    </source>
</evidence>
<evidence type="ECO:0000269" key="33">
    <source>
    </source>
</evidence>
<evidence type="ECO:0000269" key="34">
    <source>
    </source>
</evidence>
<evidence type="ECO:0000269" key="35">
    <source ref="6"/>
</evidence>
<evidence type="ECO:0000303" key="36">
    <source>
    </source>
</evidence>
<evidence type="ECO:0000305" key="37"/>
<evidence type="ECO:0007744" key="38">
    <source>
    </source>
</evidence>
<evidence type="ECO:0007744" key="39">
    <source>
    </source>
</evidence>
<evidence type="ECO:0007744" key="40">
    <source>
    </source>
</evidence>
<evidence type="ECO:0007744" key="41">
    <source>
    </source>
</evidence>
<evidence type="ECO:0007744" key="42">
    <source>
    </source>
</evidence>
<evidence type="ECO:0007829" key="43">
    <source>
        <dbReference type="PDB" id="2WVI"/>
    </source>
</evidence>
<evidence type="ECO:0007829" key="44">
    <source>
        <dbReference type="PDB" id="3SI5"/>
    </source>
</evidence>
<evidence type="ECO:0007829" key="45">
    <source>
        <dbReference type="PDB" id="4GGD"/>
    </source>
</evidence>
<comment type="function">
    <text evidence="6 8 11 12 25 26">Essential component of the mitotic checkpoint. Required for normal mitosis progression. The mitotic checkpoint delays anaphase until all chromosomes are properly attached to the mitotic spindle. One of its checkpoint functions is to inhibit the activity of the anaphase-promoting complex/cyclosome (APC/C) by blocking the binding of CDC20 to APC/C, independently of its kinase activity. The other is to monitor kinetochore activities that depend on the kinetochore motor CENPE. Required for kinetochore localization of CENPE. Negatively regulates PLK1 activity in interphase cells and suppresses centrosome amplification. Also implicated in triggering apoptosis in polyploid cells that exit aberrantly from mitotic arrest. May play a role for tumor suppression.</text>
</comment>
<comment type="catalytic activity">
    <reaction>
        <text>L-seryl-[protein] + ATP = O-phospho-L-seryl-[protein] + ADP + H(+)</text>
        <dbReference type="Rhea" id="RHEA:17989"/>
        <dbReference type="Rhea" id="RHEA-COMP:9863"/>
        <dbReference type="Rhea" id="RHEA-COMP:11604"/>
        <dbReference type="ChEBI" id="CHEBI:15378"/>
        <dbReference type="ChEBI" id="CHEBI:29999"/>
        <dbReference type="ChEBI" id="CHEBI:30616"/>
        <dbReference type="ChEBI" id="CHEBI:83421"/>
        <dbReference type="ChEBI" id="CHEBI:456216"/>
        <dbReference type="EC" id="2.7.11.1"/>
    </reaction>
</comment>
<comment type="catalytic activity">
    <reaction>
        <text>L-threonyl-[protein] + ATP = O-phospho-L-threonyl-[protein] + ADP + H(+)</text>
        <dbReference type="Rhea" id="RHEA:46608"/>
        <dbReference type="Rhea" id="RHEA-COMP:11060"/>
        <dbReference type="Rhea" id="RHEA-COMP:11605"/>
        <dbReference type="ChEBI" id="CHEBI:15378"/>
        <dbReference type="ChEBI" id="CHEBI:30013"/>
        <dbReference type="ChEBI" id="CHEBI:30616"/>
        <dbReference type="ChEBI" id="CHEBI:61977"/>
        <dbReference type="ChEBI" id="CHEBI:456216"/>
        <dbReference type="EC" id="2.7.11.1"/>
    </reaction>
</comment>
<comment type="activity regulation">
    <text evidence="9">Kinase activity stimulated by CENPE.</text>
</comment>
<comment type="subunit">
    <text evidence="6 8 9 17 19 20 21 24 26 27 28 29">Interacts with CENPE (PubMed:12925705, PubMed:19625775). Interacts with PLK1 (PubMed:16760428, PubMed:17376779, PubMed:17785528, PubMed:19503101). Part of a complex containing BUB3, CDC20 and BUB1B (PubMed:11702782). Interacts with anaphase-promoting complex/cyclosome (APC/C) (PubMed:10477750). Interacts with KNL1 (PubMed:17981135). Interacts with KAT2B (PubMed:19407811). Interacts with RIPK3 (PubMed:29883609). Interacts with the closed conformation form of MAD2L1 (PubMed:29162720).</text>
</comment>
<comment type="interaction">
    <interactant intactId="EBI-1001438">
        <id>O60566</id>
    </interactant>
    <interactant intactId="EBI-748936">
        <id>O43683</id>
        <label>BUB1</label>
    </interactant>
    <organismsDiffer>false</organismsDiffer>
    <experiments>5</experiments>
</comment>
<comment type="interaction">
    <interactant intactId="EBI-1001438">
        <id>O60566</id>
    </interactant>
    <interactant intactId="EBI-1050987">
        <id>O43684</id>
        <label>BUB3</label>
    </interactant>
    <organismsDiffer>false</organismsDiffer>
    <experiments>13</experiments>
</comment>
<comment type="interaction">
    <interactant intactId="EBI-1001438">
        <id>O60566</id>
    </interactant>
    <interactant intactId="EBI-367462">
        <id>Q12834</id>
        <label>CDC20</label>
    </interactant>
    <organismsDiffer>false</organismsDiffer>
    <experiments>38</experiments>
</comment>
<comment type="interaction">
    <interactant intactId="EBI-1001438">
        <id>O60566</id>
    </interactant>
    <interactant intactId="EBI-1375040">
        <id>Q02224</id>
        <label>CENPE</label>
    </interactant>
    <organismsDiffer>false</organismsDiffer>
    <experiments>4</experiments>
</comment>
<comment type="interaction">
    <interactant intactId="EBI-1001438">
        <id>O60566</id>
    </interactant>
    <interactant intactId="EBI-477430">
        <id>Q92831</id>
        <label>KAT2B</label>
    </interactant>
    <organismsDiffer>false</organismsDiffer>
    <experiments>14</experiments>
</comment>
<comment type="interaction">
    <interactant intactId="EBI-1001438">
        <id>O60566</id>
    </interactant>
    <interactant intactId="EBI-10973816">
        <id>Q8NG31-2</id>
        <label>KNL1</label>
    </interactant>
    <organismsDiffer>false</organismsDiffer>
    <experiments>10</experiments>
</comment>
<comment type="interaction">
    <interactant intactId="EBI-1001438">
        <id>O60566</id>
    </interactant>
    <interactant intactId="EBI-78203">
        <id>Q13257</id>
        <label>MAD2L1</label>
    </interactant>
    <organismsDiffer>false</organismsDiffer>
    <experiments>14</experiments>
</comment>
<comment type="interaction">
    <interactant intactId="EBI-1001438">
        <id>O60566</id>
    </interactant>
    <interactant intactId="EBI-477232">
        <id>Q8IXJ6</id>
        <label>SIRT2</label>
    </interactant>
    <organismsDiffer>false</organismsDiffer>
    <experiments>3</experiments>
</comment>
<comment type="interaction">
    <interactant intactId="EBI-1001438">
        <id>O60566</id>
    </interactant>
    <interactant intactId="EBI-3390054">
        <id>P0CG48</id>
        <label>UBC</label>
    </interactant>
    <organismsDiffer>false</organismsDiffer>
    <experiments>3</experiments>
</comment>
<comment type="interaction">
    <interactant intactId="EBI-1001438">
        <id>O60566</id>
    </interactant>
    <interactant intactId="EBI-356498">
        <id>P62258</id>
        <label>YWHAE</label>
    </interactant>
    <organismsDiffer>false</organismsDiffer>
    <experiments>2</experiments>
</comment>
<comment type="interaction">
    <interactant intactId="EBI-1001438">
        <id>O60566</id>
    </interactant>
    <interactant intactId="EBI-296306">
        <id>P45481</id>
        <label>Crebbp</label>
    </interactant>
    <organismsDiffer>true</organismsDiffer>
    <experiments>3</experiments>
</comment>
<comment type="subcellular location">
    <subcellularLocation>
        <location>Cytoplasm</location>
    </subcellularLocation>
    <subcellularLocation>
        <location>Nucleus</location>
    </subcellularLocation>
    <subcellularLocation>
        <location>Chromosome</location>
        <location>Centromere</location>
        <location>Kinetochore</location>
    </subcellularLocation>
    <subcellularLocation>
        <location>Cytoplasm</location>
        <location>Cytoskeleton</location>
        <location>Microtubule organizing center</location>
        <location>Centrosome</location>
    </subcellularLocation>
    <text>Cytoplasmic in interphase cells. Associates with the kinetochores in early prophase. Kinetochore localization requires BUB1, PLK1 and KNL1.</text>
</comment>
<comment type="alternative products">
    <event type="alternative splicing"/>
    <isoform>
        <id>O60566-1</id>
        <name>1</name>
        <sequence type="displayed"/>
    </isoform>
    <isoform>
        <id>O60566-2</id>
        <name>2</name>
        <sequence type="described" ref="VSP_036474 VSP_036475 VSP_036476"/>
    </isoform>
    <isoform>
        <id>O60566-3</id>
        <name>3</name>
        <sequence type="described" ref="VSP_036473"/>
    </isoform>
</comment>
<comment type="tissue specificity">
    <text evidence="7">Highly expressed in thymus followed by spleen. Preferentially expressed in tissues with a high mitotic index.</text>
</comment>
<comment type="induction">
    <text evidence="6 7 15">Induced during mitosis.</text>
</comment>
<comment type="domain">
    <text evidence="37">The D-box targets the protein for rapid degradation by ubiquitin-dependent proteolysis during the transition from mitosis to interphase.</text>
</comment>
<comment type="domain">
    <text>The BUB1 N-terminal domain directs kinetochore localization and binding to BUB3.</text>
</comment>
<comment type="PTM">
    <text evidence="15">Proteolytically cleaved by caspase-3 in a cell cycle specific manner. The cleavage might be involved in the durability of the cell cycle delay. Caspase-3 cleavage is associated with abrogation of the mitotic checkpoint. The major site of cleavage is at Asp-610.</text>
</comment>
<comment type="PTM">
    <text evidence="24">Acetylation at Lys-250 regulates its degradation and timing in anaphase entry.</text>
</comment>
<comment type="PTM">
    <text evidence="24 30">Ubiquitinated. Degraded by the proteasome (PubMed:19407811). Ubiquitinated by UBR5, promoting disassembly of the mitotic checkpoint complex from the APC/C complex (PubMed:35217622).</text>
</comment>
<comment type="PTM">
    <text evidence="22">Sumoylated with SUMO2 and SUMO3. The sumoylation mediates the association with CENPE at the kinetochore.</text>
</comment>
<comment type="PTM">
    <text evidence="6 7 19 20 23">Autophosphorylated in vitro. Intramolecular autophosphorylation is stimulated by CENPE. Phosphorylated during mitosis and hyperphosphorylated in mitotically arrested cells. Phosphorylation at Ser-670 and Ser-1043 occurs at kinetochores upon mitotic entry with dephosphorylation at the onset of anaphase.</text>
</comment>
<comment type="disease">
    <text>Defects in BUB1B are associated with tumor formation.</text>
</comment>
<comment type="disease" evidence="16">
    <disease id="DI-02189">
        <name>Premature chromatid separation trait</name>
        <acronym>PCS</acronym>
        <description>Consists of separate and splayed chromatids with discernible centromeres and involves all or most chromosomes of a metaphase. It is found in up to 2% of metaphases in cultured lymphocytes from approximately 40% of normal individuals. When PCS is present in 5% or more of cells, it is known as the heterozygous PCS trait and has no obvious phenotypic effect, although some have reported decreased fertility. Inheritance is autosomal dominant.</description>
        <dbReference type="MIM" id="176430"/>
    </disease>
    <text>The disease is caused by variants affecting the gene represented in this entry.</text>
</comment>
<comment type="disease" evidence="13">
    <disease id="DI-01994">
        <name>Mosaic variegated aneuploidy syndrome 1</name>
        <acronym>MVA1</acronym>
        <description>A severe developmental disorder characterized by mosaic aneuploidies, predominantly trisomies and monosomies, involving multiple different chromosomes and tissues. Affected individuals typically present with severe intrauterine growth retardation and microcephaly. Eye anomalies, mild dysmorphism, variable developmental delay, and a broad spectrum of additional congenital abnormalities and medical conditions may also occur. The risk of malignancy is high, with rhabdomyosarcoma, Wilms tumor and leukemia reported in several cases.</description>
        <dbReference type="MIM" id="257300"/>
    </disease>
    <text>The disease is caused by variants affecting the gene represented in this entry. MVA1 is caused by biallelic mutations in the BUB1B gene.</text>
</comment>
<comment type="similarity">
    <text evidence="37">Belongs to the protein kinase superfamily. Ser/Thr protein kinase family. BUB1 subfamily.</text>
</comment>
<comment type="sequence caution" evidence="37">
    <conflict type="erroneous initiation">
        <sequence resource="EMBL-CDS" id="BAD92019"/>
    </conflict>
</comment>
<comment type="online information" name="Atlas of Genetics and Cytogenetics in Oncology and Haematology">
    <link uri="https://atlasgeneticsoncology.org/gene/854/BUB1B"/>
</comment>
<dbReference type="EC" id="2.7.11.1"/>
<dbReference type="EMBL" id="AF053306">
    <property type="protein sequence ID" value="AAC06260.1"/>
    <property type="molecule type" value="mRNA"/>
</dbReference>
<dbReference type="EMBL" id="AF046918">
    <property type="protein sequence ID" value="AAC33435.1"/>
    <property type="molecule type" value="mRNA"/>
</dbReference>
<dbReference type="EMBL" id="AF046079">
    <property type="protein sequence ID" value="AAC12730.2"/>
    <property type="molecule type" value="mRNA"/>
</dbReference>
<dbReference type="EMBL" id="AF107297">
    <property type="protein sequence ID" value="AAD11941.1"/>
    <property type="molecule type" value="mRNA"/>
</dbReference>
<dbReference type="EMBL" id="AF035933">
    <property type="protein sequence ID" value="AAC23736.1"/>
    <property type="molecule type" value="mRNA"/>
</dbReference>
<dbReference type="EMBL" id="AF068760">
    <property type="protein sequence ID" value="AAC19118.1"/>
    <property type="molecule type" value="mRNA"/>
</dbReference>
<dbReference type="EMBL" id="AF310214">
    <property type="protein sequence ID" value="AAL10712.1"/>
    <property type="molecule type" value="Genomic_DNA"/>
</dbReference>
<dbReference type="EMBL" id="AF310192">
    <property type="protein sequence ID" value="AAL10712.1"/>
    <property type="status" value="JOINED"/>
    <property type="molecule type" value="Genomic_DNA"/>
</dbReference>
<dbReference type="EMBL" id="AF310193">
    <property type="protein sequence ID" value="AAL10712.1"/>
    <property type="status" value="JOINED"/>
    <property type="molecule type" value="Genomic_DNA"/>
</dbReference>
<dbReference type="EMBL" id="AF310194">
    <property type="protein sequence ID" value="AAL10712.1"/>
    <property type="status" value="JOINED"/>
    <property type="molecule type" value="Genomic_DNA"/>
</dbReference>
<dbReference type="EMBL" id="AF310195">
    <property type="protein sequence ID" value="AAL10712.1"/>
    <property type="status" value="JOINED"/>
    <property type="molecule type" value="Genomic_DNA"/>
</dbReference>
<dbReference type="EMBL" id="AF310196">
    <property type="protein sequence ID" value="AAL10712.1"/>
    <property type="status" value="JOINED"/>
    <property type="molecule type" value="Genomic_DNA"/>
</dbReference>
<dbReference type="EMBL" id="AF310197">
    <property type="protein sequence ID" value="AAL10712.1"/>
    <property type="status" value="JOINED"/>
    <property type="molecule type" value="Genomic_DNA"/>
</dbReference>
<dbReference type="EMBL" id="AF310198">
    <property type="protein sequence ID" value="AAL10712.1"/>
    <property type="status" value="JOINED"/>
    <property type="molecule type" value="Genomic_DNA"/>
</dbReference>
<dbReference type="EMBL" id="AF310199">
    <property type="protein sequence ID" value="AAL10712.1"/>
    <property type="status" value="JOINED"/>
    <property type="molecule type" value="Genomic_DNA"/>
</dbReference>
<dbReference type="EMBL" id="AF310200">
    <property type="protein sequence ID" value="AAL10712.1"/>
    <property type="status" value="JOINED"/>
    <property type="molecule type" value="Genomic_DNA"/>
</dbReference>
<dbReference type="EMBL" id="AF310201">
    <property type="protein sequence ID" value="AAL10712.1"/>
    <property type="status" value="JOINED"/>
    <property type="molecule type" value="Genomic_DNA"/>
</dbReference>
<dbReference type="EMBL" id="AF310202">
    <property type="protein sequence ID" value="AAL10712.1"/>
    <property type="status" value="JOINED"/>
    <property type="molecule type" value="Genomic_DNA"/>
</dbReference>
<dbReference type="EMBL" id="AF310203">
    <property type="protein sequence ID" value="AAL10712.1"/>
    <property type="status" value="JOINED"/>
    <property type="molecule type" value="Genomic_DNA"/>
</dbReference>
<dbReference type="EMBL" id="AF310204">
    <property type="protein sequence ID" value="AAL10712.1"/>
    <property type="status" value="JOINED"/>
    <property type="molecule type" value="Genomic_DNA"/>
</dbReference>
<dbReference type="EMBL" id="AF310205">
    <property type="protein sequence ID" value="AAL10712.1"/>
    <property type="status" value="JOINED"/>
    <property type="molecule type" value="Genomic_DNA"/>
</dbReference>
<dbReference type="EMBL" id="AF310206">
    <property type="protein sequence ID" value="AAL10712.1"/>
    <property type="status" value="JOINED"/>
    <property type="molecule type" value="Genomic_DNA"/>
</dbReference>
<dbReference type="EMBL" id="AF310207">
    <property type="protein sequence ID" value="AAL10712.1"/>
    <property type="status" value="JOINED"/>
    <property type="molecule type" value="Genomic_DNA"/>
</dbReference>
<dbReference type="EMBL" id="AF310208">
    <property type="protein sequence ID" value="AAL10712.1"/>
    <property type="status" value="JOINED"/>
    <property type="molecule type" value="Genomic_DNA"/>
</dbReference>
<dbReference type="EMBL" id="AF310209">
    <property type="protein sequence ID" value="AAL10712.1"/>
    <property type="status" value="JOINED"/>
    <property type="molecule type" value="Genomic_DNA"/>
</dbReference>
<dbReference type="EMBL" id="AF310210">
    <property type="protein sequence ID" value="AAL10712.1"/>
    <property type="status" value="JOINED"/>
    <property type="molecule type" value="Genomic_DNA"/>
</dbReference>
<dbReference type="EMBL" id="AF310211">
    <property type="protein sequence ID" value="AAL10712.1"/>
    <property type="status" value="JOINED"/>
    <property type="molecule type" value="Genomic_DNA"/>
</dbReference>
<dbReference type="EMBL" id="AF310212">
    <property type="protein sequence ID" value="AAL10712.1"/>
    <property type="status" value="JOINED"/>
    <property type="molecule type" value="Genomic_DNA"/>
</dbReference>
<dbReference type="EMBL" id="AF310213">
    <property type="protein sequence ID" value="AAL10712.1"/>
    <property type="status" value="JOINED"/>
    <property type="molecule type" value="Genomic_DNA"/>
</dbReference>
<dbReference type="EMBL" id="AK296795">
    <property type="protein sequence ID" value="BAG59371.1"/>
    <property type="molecule type" value="mRNA"/>
</dbReference>
<dbReference type="EMBL" id="AK296984">
    <property type="protein sequence ID" value="BAG59525.1"/>
    <property type="molecule type" value="mRNA"/>
</dbReference>
<dbReference type="EMBL" id="AK312709">
    <property type="protein sequence ID" value="BAG35587.1"/>
    <property type="molecule type" value="mRNA"/>
</dbReference>
<dbReference type="EMBL" id="AB208782">
    <property type="protein sequence ID" value="BAD92019.1"/>
    <property type="status" value="ALT_INIT"/>
    <property type="molecule type" value="mRNA"/>
</dbReference>
<dbReference type="EMBL" id="BC018739">
    <property type="protein sequence ID" value="AAH18739.1"/>
    <property type="molecule type" value="mRNA"/>
</dbReference>
<dbReference type="CCDS" id="CCDS10053.1">
    <molecule id="O60566-1"/>
</dbReference>
<dbReference type="PIR" id="JW0092">
    <property type="entry name" value="JW0092"/>
</dbReference>
<dbReference type="RefSeq" id="NP_001202.4">
    <molecule id="O60566-1"/>
    <property type="nucleotide sequence ID" value="NM_001211.5"/>
</dbReference>
<dbReference type="PDB" id="2WVI">
    <property type="method" value="X-ray"/>
    <property type="resolution" value="1.80 A"/>
    <property type="chains" value="A=57-220"/>
</dbReference>
<dbReference type="PDB" id="3SI5">
    <property type="method" value="X-ray"/>
    <property type="resolution" value="2.20 A"/>
    <property type="chains" value="A/B=57-220"/>
</dbReference>
<dbReference type="PDB" id="4GGD">
    <property type="method" value="X-ray"/>
    <property type="resolution" value="2.44 A"/>
    <property type="chains" value="C/D=20-42"/>
</dbReference>
<dbReference type="PDB" id="5JJA">
    <property type="method" value="X-ray"/>
    <property type="resolution" value="2.35 A"/>
    <property type="chains" value="C/D=647-720"/>
</dbReference>
<dbReference type="PDB" id="5K6S">
    <property type="method" value="X-ray"/>
    <property type="resolution" value="2.79 A"/>
    <property type="chains" value="B=663-681"/>
</dbReference>
<dbReference type="PDB" id="5KHU">
    <property type="method" value="EM"/>
    <property type="resolution" value="4.80 A"/>
    <property type="chains" value="Q=1-1050"/>
</dbReference>
<dbReference type="PDB" id="5LCW">
    <property type="method" value="EM"/>
    <property type="resolution" value="4.00 A"/>
    <property type="chains" value="S=1-560"/>
</dbReference>
<dbReference type="PDB" id="5SWF">
    <property type="method" value="X-ray"/>
    <property type="resolution" value="2.82 A"/>
    <property type="chains" value="B=668-676"/>
</dbReference>
<dbReference type="PDB" id="6TLJ">
    <property type="method" value="EM"/>
    <property type="resolution" value="3.80 A"/>
    <property type="chains" value="S=1-1050"/>
</dbReference>
<dbReference type="PDBsum" id="2WVI"/>
<dbReference type="PDBsum" id="3SI5"/>
<dbReference type="PDBsum" id="4GGD"/>
<dbReference type="PDBsum" id="5JJA"/>
<dbReference type="PDBsum" id="5K6S"/>
<dbReference type="PDBsum" id="5KHU"/>
<dbReference type="PDBsum" id="5LCW"/>
<dbReference type="PDBsum" id="5SWF"/>
<dbReference type="PDBsum" id="6TLJ"/>
<dbReference type="BMRB" id="O60566"/>
<dbReference type="EMDB" id="EMD-10516"/>
<dbReference type="EMDB" id="EMD-4037"/>
<dbReference type="SMR" id="O60566"/>
<dbReference type="BioGRID" id="107166">
    <property type="interactions" value="204"/>
</dbReference>
<dbReference type="ComplexPortal" id="CPX-3946">
    <property type="entry name" value="Mitotic Checkpoint Complex"/>
</dbReference>
<dbReference type="CORUM" id="O60566"/>
<dbReference type="DIP" id="DIP-24203N"/>
<dbReference type="ELM" id="O60566"/>
<dbReference type="FunCoup" id="O60566">
    <property type="interactions" value="923"/>
</dbReference>
<dbReference type="IntAct" id="O60566">
    <property type="interactions" value="105"/>
</dbReference>
<dbReference type="MINT" id="O60566"/>
<dbReference type="STRING" id="9606.ENSP00000287598"/>
<dbReference type="ChEMBL" id="CHEMBL4295998"/>
<dbReference type="GlyConnect" id="1516">
    <property type="glycosylation" value="11 N-Linked glycans (1 site)"/>
</dbReference>
<dbReference type="GlyCosmos" id="O60566">
    <property type="glycosylation" value="1 site, 11 glycans"/>
</dbReference>
<dbReference type="GlyGen" id="O60566">
    <property type="glycosylation" value="5 sites, 12 N-linked glycans (2 sites), 1 O-linked glycan (2 sites)"/>
</dbReference>
<dbReference type="iPTMnet" id="O60566"/>
<dbReference type="MetOSite" id="O60566"/>
<dbReference type="PhosphoSitePlus" id="O60566"/>
<dbReference type="BioMuta" id="BUB1B"/>
<dbReference type="jPOST" id="O60566"/>
<dbReference type="MassIVE" id="O60566"/>
<dbReference type="PaxDb" id="9606-ENSP00000287598"/>
<dbReference type="PeptideAtlas" id="O60566"/>
<dbReference type="ProteomicsDB" id="49471">
    <molecule id="O60566-1"/>
</dbReference>
<dbReference type="ProteomicsDB" id="49472">
    <molecule id="O60566-2"/>
</dbReference>
<dbReference type="ProteomicsDB" id="49473">
    <molecule id="O60566-3"/>
</dbReference>
<dbReference type="Pumba" id="O60566"/>
<dbReference type="ABCD" id="O60566">
    <property type="antibodies" value="1 sequenced antibody"/>
</dbReference>
<dbReference type="Antibodypedia" id="1214">
    <property type="antibodies" value="770 antibodies from 43 providers"/>
</dbReference>
<dbReference type="DNASU" id="701"/>
<dbReference type="Ensembl" id="ENST00000287598.11">
    <molecule id="O60566-1"/>
    <property type="protein sequence ID" value="ENSP00000287598.7"/>
    <property type="gene ID" value="ENSG00000156970.13"/>
</dbReference>
<dbReference type="Ensembl" id="ENST00000412359.7">
    <molecule id="O60566-3"/>
    <property type="protein sequence ID" value="ENSP00000398470.3"/>
    <property type="gene ID" value="ENSG00000156970.13"/>
</dbReference>
<dbReference type="GeneID" id="701"/>
<dbReference type="KEGG" id="hsa:701"/>
<dbReference type="MANE-Select" id="ENST00000287598.11">
    <property type="protein sequence ID" value="ENSP00000287598.7"/>
    <property type="RefSeq nucleotide sequence ID" value="NM_001211.6"/>
    <property type="RefSeq protein sequence ID" value="NP_001202.5"/>
</dbReference>
<dbReference type="UCSC" id="uc001zkx.5">
    <molecule id="O60566-1"/>
    <property type="organism name" value="human"/>
</dbReference>
<dbReference type="AGR" id="HGNC:1149"/>
<dbReference type="CTD" id="701"/>
<dbReference type="DisGeNET" id="701"/>
<dbReference type="GeneCards" id="BUB1B"/>
<dbReference type="HGNC" id="HGNC:1149">
    <property type="gene designation" value="BUB1B"/>
</dbReference>
<dbReference type="HPA" id="ENSG00000156970">
    <property type="expression patterns" value="Tissue enhanced (bone marrow, lymphoid tissue, testis)"/>
</dbReference>
<dbReference type="MalaCards" id="BUB1B"/>
<dbReference type="MIM" id="176430">
    <property type="type" value="phenotype"/>
</dbReference>
<dbReference type="MIM" id="257300">
    <property type="type" value="phenotype"/>
</dbReference>
<dbReference type="MIM" id="602860">
    <property type="type" value="gene"/>
</dbReference>
<dbReference type="neXtProt" id="NX_O60566"/>
<dbReference type="OpenTargets" id="ENSG00000156970"/>
<dbReference type="Orphanet" id="1052">
    <property type="disease" value="Mosaic variegated aneuploidy syndrome"/>
</dbReference>
<dbReference type="PharmGKB" id="PA82"/>
<dbReference type="VEuPathDB" id="HostDB:ENSG00000156970"/>
<dbReference type="eggNOG" id="KOG1166">
    <property type="taxonomic scope" value="Eukaryota"/>
</dbReference>
<dbReference type="GeneTree" id="ENSGT00940000158912"/>
<dbReference type="HOGENOM" id="CLU_010890_0_0_1"/>
<dbReference type="InParanoid" id="O60566"/>
<dbReference type="OMA" id="KTLCPNP"/>
<dbReference type="OrthoDB" id="248495at2759"/>
<dbReference type="PAN-GO" id="O60566">
    <property type="GO annotations" value="3 GO annotations based on evolutionary models"/>
</dbReference>
<dbReference type="PhylomeDB" id="O60566"/>
<dbReference type="TreeFam" id="TF105456"/>
<dbReference type="BRENDA" id="2.7.11.1">
    <property type="organism ID" value="2681"/>
</dbReference>
<dbReference type="PathwayCommons" id="O60566"/>
<dbReference type="Reactome" id="R-HSA-141430">
    <property type="pathway name" value="Inactivation of APC/C via direct inhibition of the APC/C complex"/>
</dbReference>
<dbReference type="Reactome" id="R-HSA-141444">
    <property type="pathway name" value="Amplification of signal from unattached kinetochores via a MAD2 inhibitory signal"/>
</dbReference>
<dbReference type="Reactome" id="R-HSA-174184">
    <property type="pathway name" value="Cdc20:Phospho-APC/C mediated degradation of Cyclin A"/>
</dbReference>
<dbReference type="Reactome" id="R-HSA-176409">
    <property type="pathway name" value="APC/C:Cdc20 mediated degradation of mitotic proteins"/>
</dbReference>
<dbReference type="Reactome" id="R-HSA-179409">
    <property type="pathway name" value="APC-Cdc20 mediated degradation of Nek2A"/>
</dbReference>
<dbReference type="Reactome" id="R-HSA-2467813">
    <property type="pathway name" value="Separation of Sister Chromatids"/>
</dbReference>
<dbReference type="Reactome" id="R-HSA-2500257">
    <property type="pathway name" value="Resolution of Sister Chromatid Cohesion"/>
</dbReference>
<dbReference type="Reactome" id="R-HSA-5663220">
    <property type="pathway name" value="RHO GTPases Activate Formins"/>
</dbReference>
<dbReference type="Reactome" id="R-HSA-68877">
    <property type="pathway name" value="Mitotic Prometaphase"/>
</dbReference>
<dbReference type="Reactome" id="R-HSA-9648025">
    <property type="pathway name" value="EML4 and NUDC in mitotic spindle formation"/>
</dbReference>
<dbReference type="SignaLink" id="O60566"/>
<dbReference type="SIGNOR" id="O60566"/>
<dbReference type="BioGRID-ORCS" id="701">
    <property type="hits" value="725 hits in 1199 CRISPR screens"/>
</dbReference>
<dbReference type="ChiTaRS" id="BUB1B">
    <property type="organism name" value="human"/>
</dbReference>
<dbReference type="EvolutionaryTrace" id="O60566"/>
<dbReference type="GeneWiki" id="BUB1B"/>
<dbReference type="GenomeRNAi" id="701"/>
<dbReference type="Pharos" id="O60566">
    <property type="development level" value="Tbio"/>
</dbReference>
<dbReference type="PRO" id="PR:O60566"/>
<dbReference type="Proteomes" id="UP000005640">
    <property type="component" value="Chromosome 15"/>
</dbReference>
<dbReference type="RNAct" id="O60566">
    <property type="molecule type" value="protein"/>
</dbReference>
<dbReference type="Bgee" id="ENSG00000156970">
    <property type="expression patterns" value="Expressed in secondary oocyte and 135 other cell types or tissues"/>
</dbReference>
<dbReference type="ExpressionAtlas" id="O60566">
    <property type="expression patterns" value="baseline and differential"/>
</dbReference>
<dbReference type="GO" id="GO:0005680">
    <property type="term" value="C:anaphase-promoting complex"/>
    <property type="evidence" value="ECO:0000304"/>
    <property type="project" value="ProtInc"/>
</dbReference>
<dbReference type="GO" id="GO:0005813">
    <property type="term" value="C:centrosome"/>
    <property type="evidence" value="ECO:0007669"/>
    <property type="project" value="UniProtKB-SubCell"/>
</dbReference>
<dbReference type="GO" id="GO:0036064">
    <property type="term" value="C:ciliary basal body"/>
    <property type="evidence" value="ECO:0000314"/>
    <property type="project" value="HPA"/>
</dbReference>
<dbReference type="GO" id="GO:0005737">
    <property type="term" value="C:cytoplasm"/>
    <property type="evidence" value="ECO:0000314"/>
    <property type="project" value="UniProtKB"/>
</dbReference>
<dbReference type="GO" id="GO:0005829">
    <property type="term" value="C:cytosol"/>
    <property type="evidence" value="ECO:0000314"/>
    <property type="project" value="HPA"/>
</dbReference>
<dbReference type="GO" id="GO:0000776">
    <property type="term" value="C:kinetochore"/>
    <property type="evidence" value="ECO:0000314"/>
    <property type="project" value="UniProtKB"/>
</dbReference>
<dbReference type="GO" id="GO:0033597">
    <property type="term" value="C:mitotic checkpoint complex"/>
    <property type="evidence" value="ECO:0000353"/>
    <property type="project" value="ComplexPortal"/>
</dbReference>
<dbReference type="GO" id="GO:0005634">
    <property type="term" value="C:nucleus"/>
    <property type="evidence" value="ECO:0000318"/>
    <property type="project" value="GO_Central"/>
</dbReference>
<dbReference type="GO" id="GO:0000940">
    <property type="term" value="C:outer kinetochore"/>
    <property type="evidence" value="ECO:0000314"/>
    <property type="project" value="UniProtKB"/>
</dbReference>
<dbReference type="GO" id="GO:0048471">
    <property type="term" value="C:perinuclear region of cytoplasm"/>
    <property type="evidence" value="ECO:0000314"/>
    <property type="project" value="BHF-UCL"/>
</dbReference>
<dbReference type="GO" id="GO:0005819">
    <property type="term" value="C:spindle"/>
    <property type="evidence" value="ECO:0000314"/>
    <property type="project" value="UniProtKB"/>
</dbReference>
<dbReference type="GO" id="GO:0005524">
    <property type="term" value="F:ATP binding"/>
    <property type="evidence" value="ECO:0007669"/>
    <property type="project" value="UniProtKB-KW"/>
</dbReference>
<dbReference type="GO" id="GO:0004672">
    <property type="term" value="F:protein kinase activity"/>
    <property type="evidence" value="ECO:0000318"/>
    <property type="project" value="GO_Central"/>
</dbReference>
<dbReference type="GO" id="GO:0106310">
    <property type="term" value="F:protein serine kinase activity"/>
    <property type="evidence" value="ECO:0007669"/>
    <property type="project" value="RHEA"/>
</dbReference>
<dbReference type="GO" id="GO:0004674">
    <property type="term" value="F:protein serine/threonine kinase activity"/>
    <property type="evidence" value="ECO:0007669"/>
    <property type="project" value="UniProtKB-KW"/>
</dbReference>
<dbReference type="GO" id="GO:0006915">
    <property type="term" value="P:apoptotic process"/>
    <property type="evidence" value="ECO:0007669"/>
    <property type="project" value="UniProtKB-KW"/>
</dbReference>
<dbReference type="GO" id="GO:0051301">
    <property type="term" value="P:cell division"/>
    <property type="evidence" value="ECO:0007669"/>
    <property type="project" value="UniProtKB-KW"/>
</dbReference>
<dbReference type="GO" id="GO:0051754">
    <property type="term" value="P:meiotic sister chromatid cohesion, centromeric"/>
    <property type="evidence" value="ECO:0000318"/>
    <property type="project" value="GO_Central"/>
</dbReference>
<dbReference type="GO" id="GO:0007091">
    <property type="term" value="P:metaphase/anaphase transition of mitotic cell cycle"/>
    <property type="evidence" value="ECO:0007669"/>
    <property type="project" value="Ensembl"/>
</dbReference>
<dbReference type="GO" id="GO:0007094">
    <property type="term" value="P:mitotic spindle assembly checkpoint signaling"/>
    <property type="evidence" value="ECO:0000314"/>
    <property type="project" value="UniProtKB"/>
</dbReference>
<dbReference type="GO" id="GO:0071459">
    <property type="term" value="P:protein localization to chromosome, centromeric region"/>
    <property type="evidence" value="ECO:0007669"/>
    <property type="project" value="Ensembl"/>
</dbReference>
<dbReference type="CDD" id="cd14029">
    <property type="entry name" value="STKc_BubR1_vert"/>
    <property type="match status" value="1"/>
</dbReference>
<dbReference type="DisProt" id="DP01117"/>
<dbReference type="FunFam" id="1.10.510.10:FF:000494">
    <property type="entry name" value="mitotic checkpoint serine/threonine-protein kinase BUB1 beta"/>
    <property type="match status" value="1"/>
</dbReference>
<dbReference type="FunFam" id="1.25.40.430:FF:000002">
    <property type="entry name" value="mitotic checkpoint serine/threonine-protein kinase BUB1 beta"/>
    <property type="match status" value="1"/>
</dbReference>
<dbReference type="Gene3D" id="1.25.40.430">
    <property type="match status" value="1"/>
</dbReference>
<dbReference type="Gene3D" id="1.10.510.10">
    <property type="entry name" value="Transferase(Phosphotransferase) domain 1"/>
    <property type="match status" value="1"/>
</dbReference>
<dbReference type="IDEAL" id="IID00407"/>
<dbReference type="InterPro" id="IPR015661">
    <property type="entry name" value="Bub1/Mad3"/>
</dbReference>
<dbReference type="InterPro" id="IPR011009">
    <property type="entry name" value="Kinase-like_dom_sf"/>
</dbReference>
<dbReference type="InterPro" id="IPR013212">
    <property type="entry name" value="Mad3/Bub1_I"/>
</dbReference>
<dbReference type="PANTHER" id="PTHR14030">
    <property type="entry name" value="MITOTIC CHECKPOINT SERINE/THREONINE-PROTEIN KINASE BUB1"/>
    <property type="match status" value="1"/>
</dbReference>
<dbReference type="PANTHER" id="PTHR14030:SF25">
    <property type="entry name" value="MITOTIC CHECKPOINT SERINE_THREONINE-PROTEIN KINASE BUB1 BETA"/>
    <property type="match status" value="1"/>
</dbReference>
<dbReference type="Pfam" id="PF08311">
    <property type="entry name" value="Mad3_BUB1_I"/>
    <property type="match status" value="1"/>
</dbReference>
<dbReference type="SMART" id="SM00777">
    <property type="entry name" value="Mad3_BUB1_I"/>
    <property type="match status" value="1"/>
</dbReference>
<dbReference type="SUPFAM" id="SSF56112">
    <property type="entry name" value="Protein kinase-like (PK-like)"/>
    <property type="match status" value="1"/>
</dbReference>
<dbReference type="PROSITE" id="PS51489">
    <property type="entry name" value="BUB1_N"/>
    <property type="match status" value="1"/>
</dbReference>
<accession>O60566</accession>
<accession>B2R6U0</accession>
<accession>B4DL09</accession>
<accession>B4DLG3</accession>
<accession>O60501</accession>
<accession>O60627</accession>
<accession>O60758</accession>
<accession>O75389</accession>
<accession>Q59HH6</accession>
<accession>Q8WV50</accession>
<accession>Q96KM4</accession>